<comment type="function">
    <text evidence="1">Formation of pseudouridine at positions 38, 39 and 40 in the anticodon stem and loop of transfer RNAs.</text>
</comment>
<comment type="catalytic activity">
    <reaction evidence="1">
        <text>uridine(38/39/40) in tRNA = pseudouridine(38/39/40) in tRNA</text>
        <dbReference type="Rhea" id="RHEA:22376"/>
        <dbReference type="Rhea" id="RHEA-COMP:10085"/>
        <dbReference type="Rhea" id="RHEA-COMP:10087"/>
        <dbReference type="ChEBI" id="CHEBI:65314"/>
        <dbReference type="ChEBI" id="CHEBI:65315"/>
        <dbReference type="EC" id="5.4.99.12"/>
    </reaction>
</comment>
<comment type="subunit">
    <text evidence="1">Homodimer.</text>
</comment>
<comment type="similarity">
    <text evidence="1">Belongs to the tRNA pseudouridine synthase TruA family.</text>
</comment>
<organism>
    <name type="scientific">Vibrio cholerae serotype O1 (strain ATCC 39541 / Classical Ogawa 395 / O395)</name>
    <dbReference type="NCBI Taxonomy" id="345073"/>
    <lineage>
        <taxon>Bacteria</taxon>
        <taxon>Pseudomonadati</taxon>
        <taxon>Pseudomonadota</taxon>
        <taxon>Gammaproteobacteria</taxon>
        <taxon>Vibrionales</taxon>
        <taxon>Vibrionaceae</taxon>
        <taxon>Vibrio</taxon>
    </lineage>
</organism>
<protein>
    <recommendedName>
        <fullName evidence="1">tRNA pseudouridine synthase A</fullName>
        <ecNumber evidence="1">5.4.99.12</ecNumber>
    </recommendedName>
    <alternativeName>
        <fullName evidence="1">tRNA pseudouridine(38-40) synthase</fullName>
    </alternativeName>
    <alternativeName>
        <fullName evidence="1">tRNA pseudouridylate synthase I</fullName>
    </alternativeName>
    <alternativeName>
        <fullName evidence="1">tRNA-uridine isomerase I</fullName>
    </alternativeName>
</protein>
<dbReference type="EC" id="5.4.99.12" evidence="1"/>
<dbReference type="EMBL" id="CP000627">
    <property type="protein sequence ID" value="ABQ21194.1"/>
    <property type="molecule type" value="Genomic_DNA"/>
</dbReference>
<dbReference type="EMBL" id="CP001235">
    <property type="protein sequence ID" value="ACP09026.1"/>
    <property type="molecule type" value="Genomic_DNA"/>
</dbReference>
<dbReference type="RefSeq" id="WP_001216995.1">
    <property type="nucleotide sequence ID" value="NZ_JAACZH010000005.1"/>
</dbReference>
<dbReference type="SMR" id="A5F2T4"/>
<dbReference type="KEGG" id="vco:VC0395_A0520"/>
<dbReference type="KEGG" id="vcr:VC395_1014"/>
<dbReference type="PATRIC" id="fig|345073.21.peg.984"/>
<dbReference type="eggNOG" id="COG0101">
    <property type="taxonomic scope" value="Bacteria"/>
</dbReference>
<dbReference type="HOGENOM" id="CLU_014673_0_2_6"/>
<dbReference type="OrthoDB" id="9811823at2"/>
<dbReference type="Proteomes" id="UP000000249">
    <property type="component" value="Chromosome 2"/>
</dbReference>
<dbReference type="GO" id="GO:0003723">
    <property type="term" value="F:RNA binding"/>
    <property type="evidence" value="ECO:0007669"/>
    <property type="project" value="InterPro"/>
</dbReference>
<dbReference type="GO" id="GO:0160147">
    <property type="term" value="F:tRNA pseudouridine(38-40) synthase activity"/>
    <property type="evidence" value="ECO:0007669"/>
    <property type="project" value="UniProtKB-EC"/>
</dbReference>
<dbReference type="GO" id="GO:0031119">
    <property type="term" value="P:tRNA pseudouridine synthesis"/>
    <property type="evidence" value="ECO:0007669"/>
    <property type="project" value="UniProtKB-UniRule"/>
</dbReference>
<dbReference type="CDD" id="cd02570">
    <property type="entry name" value="PseudoU_synth_EcTruA"/>
    <property type="match status" value="1"/>
</dbReference>
<dbReference type="FunFam" id="3.30.70.580:FF:000001">
    <property type="entry name" value="tRNA pseudouridine synthase A"/>
    <property type="match status" value="1"/>
</dbReference>
<dbReference type="FunFam" id="3.30.70.660:FF:000001">
    <property type="entry name" value="tRNA pseudouridine synthase A"/>
    <property type="match status" value="1"/>
</dbReference>
<dbReference type="Gene3D" id="3.30.70.660">
    <property type="entry name" value="Pseudouridine synthase I, catalytic domain, C-terminal subdomain"/>
    <property type="match status" value="1"/>
</dbReference>
<dbReference type="Gene3D" id="3.30.70.580">
    <property type="entry name" value="Pseudouridine synthase I, catalytic domain, N-terminal subdomain"/>
    <property type="match status" value="1"/>
</dbReference>
<dbReference type="HAMAP" id="MF_00171">
    <property type="entry name" value="TruA"/>
    <property type="match status" value="1"/>
</dbReference>
<dbReference type="InterPro" id="IPR020103">
    <property type="entry name" value="PsdUridine_synth_cat_dom_sf"/>
</dbReference>
<dbReference type="InterPro" id="IPR001406">
    <property type="entry name" value="PsdUridine_synth_TruA"/>
</dbReference>
<dbReference type="InterPro" id="IPR020097">
    <property type="entry name" value="PsdUridine_synth_TruA_a/b_dom"/>
</dbReference>
<dbReference type="InterPro" id="IPR020095">
    <property type="entry name" value="PsdUridine_synth_TruA_C"/>
</dbReference>
<dbReference type="InterPro" id="IPR020094">
    <property type="entry name" value="TruA/RsuA/RluB/E/F_N"/>
</dbReference>
<dbReference type="NCBIfam" id="TIGR00071">
    <property type="entry name" value="hisT_truA"/>
    <property type="match status" value="1"/>
</dbReference>
<dbReference type="PANTHER" id="PTHR11142">
    <property type="entry name" value="PSEUDOURIDYLATE SYNTHASE"/>
    <property type="match status" value="1"/>
</dbReference>
<dbReference type="PANTHER" id="PTHR11142:SF0">
    <property type="entry name" value="TRNA PSEUDOURIDINE SYNTHASE-LIKE 1"/>
    <property type="match status" value="1"/>
</dbReference>
<dbReference type="Pfam" id="PF01416">
    <property type="entry name" value="PseudoU_synth_1"/>
    <property type="match status" value="2"/>
</dbReference>
<dbReference type="PIRSF" id="PIRSF001430">
    <property type="entry name" value="tRNA_psdUrid_synth"/>
    <property type="match status" value="1"/>
</dbReference>
<dbReference type="SUPFAM" id="SSF55120">
    <property type="entry name" value="Pseudouridine synthase"/>
    <property type="match status" value="1"/>
</dbReference>
<reference key="1">
    <citation type="submission" date="2007-03" db="EMBL/GenBank/DDBJ databases">
        <authorList>
            <person name="Heidelberg J."/>
        </authorList>
    </citation>
    <scope>NUCLEOTIDE SEQUENCE [LARGE SCALE GENOMIC DNA]</scope>
    <source>
        <strain>ATCC 39541 / Classical Ogawa 395 / O395</strain>
    </source>
</reference>
<reference key="2">
    <citation type="journal article" date="2008" name="PLoS ONE">
        <title>A recalibrated molecular clock and independent origins for the cholera pandemic clones.</title>
        <authorList>
            <person name="Feng L."/>
            <person name="Reeves P.R."/>
            <person name="Lan R."/>
            <person name="Ren Y."/>
            <person name="Gao C."/>
            <person name="Zhou Z."/>
            <person name="Ren Y."/>
            <person name="Cheng J."/>
            <person name="Wang W."/>
            <person name="Wang J."/>
            <person name="Qian W."/>
            <person name="Li D."/>
            <person name="Wang L."/>
        </authorList>
    </citation>
    <scope>NUCLEOTIDE SEQUENCE [LARGE SCALE GENOMIC DNA]</scope>
    <source>
        <strain>ATCC 39541 / Classical Ogawa 395 / O395</strain>
    </source>
</reference>
<accession>A5F2T4</accession>
<accession>C3LZ10</accession>
<sequence>MRIALGIEYDGTHYYGWQRQREVKSVQEALEKALSKIANHPVEVQCAGRTDAGVHGTGQVVHFDTTAERQMVAWTMGANANLPKDIAVRWAMAVPDEFHARFSATARRYRYVIYNHVYRPGILNSGVSHYHGELDVEKMQQAGQYLLGENDFTSFRAVHCQSRSPWRNVMHLNVTRHGRYVVIDIKANAFVHHMVRNITGSLIAVGRGEQKPEWIQWLLAQKDRTLAAATAKAEGLYLVSVDYPAHFGLPEMPIGPLFLPDNLN</sequence>
<keyword id="KW-0413">Isomerase</keyword>
<keyword id="KW-0819">tRNA processing</keyword>
<gene>
    <name evidence="1" type="primary">truA</name>
    <name type="ordered locus">VC0395_A0520</name>
    <name type="ordered locus">VC395_1014</name>
</gene>
<feature type="chain" id="PRO_1000071599" description="tRNA pseudouridine synthase A">
    <location>
        <begin position="1"/>
        <end position="264"/>
    </location>
</feature>
<feature type="active site" description="Nucleophile" evidence="1">
    <location>
        <position position="51"/>
    </location>
</feature>
<feature type="binding site" evidence="1">
    <location>
        <position position="109"/>
    </location>
    <ligand>
        <name>substrate</name>
    </ligand>
</feature>
<proteinExistence type="inferred from homology"/>
<evidence type="ECO:0000255" key="1">
    <source>
        <dbReference type="HAMAP-Rule" id="MF_00171"/>
    </source>
</evidence>
<name>TRUA_VIBC3</name>